<gene>
    <name evidence="1" type="primary">yidC</name>
</gene>
<organism>
    <name type="scientific">Pseudomonas putida</name>
    <name type="common">Arthrobacter siderocapsulatus</name>
    <dbReference type="NCBI Taxonomy" id="303"/>
    <lineage>
        <taxon>Bacteria</taxon>
        <taxon>Pseudomonadati</taxon>
        <taxon>Pseudomonadota</taxon>
        <taxon>Gammaproteobacteria</taxon>
        <taxon>Pseudomonadales</taxon>
        <taxon>Pseudomonadaceae</taxon>
        <taxon>Pseudomonas</taxon>
    </lineage>
</organism>
<proteinExistence type="inferred from homology"/>
<reference key="1">
    <citation type="journal article" date="1992" name="Mol. Microbiol.">
        <title>Genes and their organization in the replication origin region of the bacterial chromosome.</title>
        <authorList>
            <person name="Ogasawara N."/>
            <person name="Yoshikawa H."/>
        </authorList>
    </citation>
    <scope>NUCLEOTIDE SEQUENCE [GENOMIC DNA]</scope>
    <source>
        <strain>TN2100</strain>
    </source>
</reference>
<name>YIDC_PSEPU</name>
<accession>P0A141</accession>
<accession>P25754</accession>
<protein>
    <recommendedName>
        <fullName evidence="1">Membrane protein insertase YidC</fullName>
    </recommendedName>
    <alternativeName>
        <fullName evidence="1">Foldase YidC</fullName>
    </alternativeName>
    <alternativeName>
        <fullName evidence="1">Membrane integrase YidC</fullName>
    </alternativeName>
    <alternativeName>
        <fullName evidence="1">Membrane protein YidC</fullName>
    </alternativeName>
</protein>
<sequence>MDIKRTILIAALAVVSYVMVLKWNDDYGQAALPTQNTAASTVAPGLPDGVPAGNNGASADVPSANAESSPAELAPVALSKDLIRVKTDVLELAIDPVGGDIVQLNLPKYPRRQDHPNIPFQLFDNGGERVYLAQSGLTGTDGPDARASGRPLYAAEQKSYQLADGQEQLVVDLKFSDNGVNYIKRFSFKRGEYDLNVSYLIDNQSGQAWNGNMFAQLKRDASGDPSSSTATGTATYLGAALWTASEPYKKVSMKDIDKGSLKENVSGGWVAWLQHYFVTAWIPAKSDNNVVQTRKDSQGNYIIGYTGPVISVPAGGKVETSALLYAGPKIQSKLKELSPGLELTVDYGFLWFIAQPIFWLLQHIHSLLGNWGWSIIVLTMLIKGLFFPLSAASYRSMARMRAVAPKLAALKERFGDDRQKMSQAMMELYKKEKINPLGGCLPILVQMPVFLALYWVLLESVEMRQAPWILWITDLSIKDPFFILPIIMGATMFIQQRLNPTPPDPMQAKVMKMMPIIFTFFFLWFPAGLVLYWVVNNCLSISQQWYITRRIEAATKKAAA</sequence>
<dbReference type="EMBL" id="X62540">
    <property type="protein sequence ID" value="CAA44417.1"/>
    <property type="molecule type" value="Genomic_DNA"/>
</dbReference>
<dbReference type="PIR" id="JQ1221">
    <property type="entry name" value="JQ1221"/>
</dbReference>
<dbReference type="RefSeq" id="WP_010951425.1">
    <property type="nucleotide sequence ID" value="NZ_SPUU01000003.1"/>
</dbReference>
<dbReference type="SMR" id="P0A141"/>
<dbReference type="GeneID" id="83683239"/>
<dbReference type="eggNOG" id="COG0706">
    <property type="taxonomic scope" value="Bacteria"/>
</dbReference>
<dbReference type="OMA" id="YAEFGWV"/>
<dbReference type="GO" id="GO:0005886">
    <property type="term" value="C:plasma membrane"/>
    <property type="evidence" value="ECO:0007669"/>
    <property type="project" value="UniProtKB-SubCell"/>
</dbReference>
<dbReference type="GO" id="GO:0032977">
    <property type="term" value="F:membrane insertase activity"/>
    <property type="evidence" value="ECO:0007669"/>
    <property type="project" value="InterPro"/>
</dbReference>
<dbReference type="GO" id="GO:0051205">
    <property type="term" value="P:protein insertion into membrane"/>
    <property type="evidence" value="ECO:0007669"/>
    <property type="project" value="TreeGrafter"/>
</dbReference>
<dbReference type="GO" id="GO:0015031">
    <property type="term" value="P:protein transport"/>
    <property type="evidence" value="ECO:0007669"/>
    <property type="project" value="UniProtKB-KW"/>
</dbReference>
<dbReference type="CDD" id="cd20070">
    <property type="entry name" value="5TM_YidC_Alb3"/>
    <property type="match status" value="1"/>
</dbReference>
<dbReference type="CDD" id="cd19961">
    <property type="entry name" value="EcYidC-like_peri"/>
    <property type="match status" value="1"/>
</dbReference>
<dbReference type="Gene3D" id="2.70.98.90">
    <property type="match status" value="1"/>
</dbReference>
<dbReference type="HAMAP" id="MF_01810">
    <property type="entry name" value="YidC_type1"/>
    <property type="match status" value="1"/>
</dbReference>
<dbReference type="InterPro" id="IPR019998">
    <property type="entry name" value="Membr_insert_YidC"/>
</dbReference>
<dbReference type="InterPro" id="IPR028053">
    <property type="entry name" value="Membr_insert_YidC_N"/>
</dbReference>
<dbReference type="InterPro" id="IPR001708">
    <property type="entry name" value="YidC/ALB3/OXA1/COX18"/>
</dbReference>
<dbReference type="InterPro" id="IPR028055">
    <property type="entry name" value="YidC/Oxa/ALB_C"/>
</dbReference>
<dbReference type="InterPro" id="IPR047196">
    <property type="entry name" value="YidC_ALB_C"/>
</dbReference>
<dbReference type="InterPro" id="IPR038221">
    <property type="entry name" value="YidC_periplasmic_sf"/>
</dbReference>
<dbReference type="NCBIfam" id="NF002352">
    <property type="entry name" value="PRK01318.1-3"/>
    <property type="match status" value="1"/>
</dbReference>
<dbReference type="NCBIfam" id="NF002353">
    <property type="entry name" value="PRK01318.1-4"/>
    <property type="match status" value="1"/>
</dbReference>
<dbReference type="NCBIfam" id="TIGR03593">
    <property type="entry name" value="yidC_nterm"/>
    <property type="match status" value="1"/>
</dbReference>
<dbReference type="NCBIfam" id="TIGR03592">
    <property type="entry name" value="yidC_oxa1_cterm"/>
    <property type="match status" value="1"/>
</dbReference>
<dbReference type="PANTHER" id="PTHR12428:SF65">
    <property type="entry name" value="CYTOCHROME C OXIDASE ASSEMBLY PROTEIN COX18, MITOCHONDRIAL"/>
    <property type="match status" value="1"/>
</dbReference>
<dbReference type="PANTHER" id="PTHR12428">
    <property type="entry name" value="OXA1"/>
    <property type="match status" value="1"/>
</dbReference>
<dbReference type="Pfam" id="PF02096">
    <property type="entry name" value="60KD_IMP"/>
    <property type="match status" value="1"/>
</dbReference>
<dbReference type="Pfam" id="PF14849">
    <property type="entry name" value="YidC_periplas"/>
    <property type="match status" value="1"/>
</dbReference>
<dbReference type="PRINTS" id="PR00701">
    <property type="entry name" value="60KDINNERMP"/>
</dbReference>
<dbReference type="PRINTS" id="PR01900">
    <property type="entry name" value="YIDCPROTEIN"/>
</dbReference>
<evidence type="ECO:0000255" key="1">
    <source>
        <dbReference type="HAMAP-Rule" id="MF_01810"/>
    </source>
</evidence>
<evidence type="ECO:0000256" key="2">
    <source>
        <dbReference type="SAM" id="MobiDB-lite"/>
    </source>
</evidence>
<comment type="function">
    <text evidence="1">Required for the insertion and/or proper folding and/or complex formation of integral membrane proteins into the membrane. Involved in integration of membrane proteins that insert both dependently and independently of the Sec translocase complex, as well as at least some lipoproteins. Aids folding of multispanning membrane proteins.</text>
</comment>
<comment type="subunit">
    <text evidence="1">Interacts with the Sec translocase complex via SecD. Specifically interacts with transmembrane segments of nascent integral membrane proteins during membrane integration.</text>
</comment>
<comment type="subcellular location">
    <subcellularLocation>
        <location evidence="1">Cell membrane</location>
        <topology evidence="1">Multi-pass membrane protein</topology>
    </subcellularLocation>
</comment>
<comment type="similarity">
    <text evidence="1">Belongs to the OXA1/ALB3/YidC family. Type 1 subfamily.</text>
</comment>
<keyword id="KW-1003">Cell membrane</keyword>
<keyword id="KW-0143">Chaperone</keyword>
<keyword id="KW-0472">Membrane</keyword>
<keyword id="KW-0653">Protein transport</keyword>
<keyword id="KW-0812">Transmembrane</keyword>
<keyword id="KW-1133">Transmembrane helix</keyword>
<keyword id="KW-0813">Transport</keyword>
<feature type="chain" id="PRO_0000124743" description="Membrane protein insertase YidC">
    <location>
        <begin position="1"/>
        <end position="560"/>
    </location>
</feature>
<feature type="transmembrane region" description="Helical" evidence="1">
    <location>
        <begin position="1"/>
        <end position="21"/>
    </location>
</feature>
<feature type="transmembrane region" description="Helical" evidence="1">
    <location>
        <begin position="341"/>
        <end position="361"/>
    </location>
</feature>
<feature type="transmembrane region" description="Helical" evidence="1">
    <location>
        <begin position="367"/>
        <end position="387"/>
    </location>
</feature>
<feature type="transmembrane region" description="Helical" evidence="1">
    <location>
        <begin position="437"/>
        <end position="457"/>
    </location>
</feature>
<feature type="transmembrane region" description="Helical" evidence="1">
    <location>
        <begin position="468"/>
        <end position="488"/>
    </location>
</feature>
<feature type="transmembrane region" description="Helical" evidence="1">
    <location>
        <begin position="515"/>
        <end position="535"/>
    </location>
</feature>
<feature type="region of interest" description="Disordered" evidence="2">
    <location>
        <begin position="42"/>
        <end position="66"/>
    </location>
</feature>